<reference key="1">
    <citation type="journal article" date="2000" name="Zoology">
        <title>The complete mitochondrial genome sequence of the African elephant (Loxodonta africana), phylogenetic relationships of Proboscidea to other mammals and D-loop heteroplasmy.</title>
        <authorList>
            <person name="Hauf J."/>
            <person name="Waddell P.J."/>
            <person name="Chalwatzis N."/>
            <person name="Joger U."/>
            <person name="Zimmermann F.K."/>
        </authorList>
    </citation>
    <scope>NUCLEOTIDE SEQUENCE [GENOMIC DNA]</scope>
    <source>
        <tissue>Blood</tissue>
    </source>
</reference>
<reference key="2">
    <citation type="journal article" date="2006" name="PLoS Biol.">
        <title>Complete mitochondrial genome and phylogeny of Pleistocene mammoth Mammuthus primigenius.</title>
        <authorList>
            <person name="Rogaev E.I."/>
            <person name="Moliaka Y.K."/>
            <person name="Malyarchuk B.A."/>
            <person name="Kondrashov F.A."/>
            <person name="Derenko M.V."/>
            <person name="Chumakov I."/>
            <person name="Grigorenko A.P."/>
        </authorList>
    </citation>
    <scope>NUCLEOTIDE SEQUENCE [GENOMIC DNA]</scope>
    <source>
        <tissue>Blood</tissue>
    </source>
</reference>
<proteinExistence type="inferred from homology"/>
<name>COX2_LOXAF</name>
<evidence type="ECO:0000250" key="1">
    <source>
        <dbReference type="UniProtKB" id="P00403"/>
    </source>
</evidence>
<evidence type="ECO:0000250" key="2">
    <source>
        <dbReference type="UniProtKB" id="P00406"/>
    </source>
</evidence>
<evidence type="ECO:0000250" key="3">
    <source>
        <dbReference type="UniProtKB" id="P00410"/>
    </source>
</evidence>
<evidence type="ECO:0000250" key="4">
    <source>
        <dbReference type="UniProtKB" id="P68530"/>
    </source>
</evidence>
<evidence type="ECO:0000305" key="5"/>
<geneLocation type="mitochondrion"/>
<feature type="chain" id="PRO_0000183622" description="Cytochrome c oxidase subunit 2">
    <location>
        <begin position="1"/>
        <end position="228"/>
    </location>
</feature>
<feature type="topological domain" description="Mitochondrial intermembrane" evidence="4">
    <location>
        <begin position="1"/>
        <end position="14"/>
    </location>
</feature>
<feature type="transmembrane region" description="Helical; Name=I" evidence="4">
    <location>
        <begin position="15"/>
        <end position="45"/>
    </location>
</feature>
<feature type="topological domain" description="Mitochondrial matrix" evidence="4">
    <location>
        <begin position="46"/>
        <end position="59"/>
    </location>
</feature>
<feature type="transmembrane region" description="Helical; Name=II" evidence="4">
    <location>
        <begin position="60"/>
        <end position="87"/>
    </location>
</feature>
<feature type="topological domain" description="Mitochondrial intermembrane" evidence="4">
    <location>
        <begin position="88"/>
        <end position="228"/>
    </location>
</feature>
<feature type="binding site" evidence="4">
    <location>
        <position position="161"/>
    </location>
    <ligand>
        <name>Cu cation</name>
        <dbReference type="ChEBI" id="CHEBI:23378"/>
        <label>A1</label>
    </ligand>
</feature>
<feature type="binding site" evidence="4">
    <location>
        <position position="196"/>
    </location>
    <ligand>
        <name>Cu cation</name>
        <dbReference type="ChEBI" id="CHEBI:23378"/>
        <label>A1</label>
    </ligand>
</feature>
<feature type="binding site" evidence="4">
    <location>
        <position position="196"/>
    </location>
    <ligand>
        <name>Cu cation</name>
        <dbReference type="ChEBI" id="CHEBI:23378"/>
        <label>A2</label>
    </ligand>
</feature>
<feature type="binding site" evidence="4">
    <location>
        <position position="198"/>
    </location>
    <ligand>
        <name>Cu cation</name>
        <dbReference type="ChEBI" id="CHEBI:23378"/>
        <label>A2</label>
    </ligand>
</feature>
<feature type="binding site" evidence="4">
    <location>
        <position position="198"/>
    </location>
    <ligand>
        <name>Mg(2+)</name>
        <dbReference type="ChEBI" id="CHEBI:18420"/>
        <note>ligand shared with MT-CO1</note>
    </ligand>
</feature>
<feature type="binding site" evidence="4">
    <location>
        <position position="200"/>
    </location>
    <ligand>
        <name>Cu cation</name>
        <dbReference type="ChEBI" id="CHEBI:23378"/>
        <label>A1</label>
    </ligand>
</feature>
<feature type="binding site" evidence="4">
    <location>
        <position position="200"/>
    </location>
    <ligand>
        <name>Cu cation</name>
        <dbReference type="ChEBI" id="CHEBI:23378"/>
        <label>A2</label>
    </ligand>
</feature>
<feature type="binding site" evidence="4">
    <location>
        <position position="204"/>
    </location>
    <ligand>
        <name>Cu cation</name>
        <dbReference type="ChEBI" id="CHEBI:23378"/>
        <label>A2</label>
    </ligand>
</feature>
<feature type="binding site" evidence="4">
    <location>
        <position position="207"/>
    </location>
    <ligand>
        <name>Cu cation</name>
        <dbReference type="ChEBI" id="CHEBI:23378"/>
        <label>A1</label>
    </ligand>
</feature>
<feature type="modified residue" description="Phosphotyrosine" evidence="2">
    <location>
        <position position="218"/>
    </location>
</feature>
<organism>
    <name type="scientific">Loxodonta africana</name>
    <name type="common">African elephant</name>
    <dbReference type="NCBI Taxonomy" id="9785"/>
    <lineage>
        <taxon>Eukaryota</taxon>
        <taxon>Metazoa</taxon>
        <taxon>Chordata</taxon>
        <taxon>Craniata</taxon>
        <taxon>Vertebrata</taxon>
        <taxon>Euteleostomi</taxon>
        <taxon>Mammalia</taxon>
        <taxon>Eutheria</taxon>
        <taxon>Afrotheria</taxon>
        <taxon>Proboscidea</taxon>
        <taxon>Elephantidae</taxon>
        <taxon>Loxodonta</taxon>
    </lineage>
</organism>
<sequence length="228" mass="26149">MAYPLQLGFQDATSPVMEELLHFHDHTLMIIFLISSLVLYIIMLMLTSKLVHTNMMNVQEMEMIWTILPAIILILIALPSLHTLYMMDEINNPLLTIKTMGHQWFWSYEYTDYEDLAFDSYMITTDSLKFGELRLLEVDNRMVLPTDLPVRVLVSSEDVLHSWAVPSLGLKTDAIPGRLNQVTLTSMRPGLFYGQCSEICGANHSFMPIVLELVPLKYFENWSASLAQ</sequence>
<accession>Q9TA26</accession>
<accession>Q2I3F8</accession>
<comment type="function">
    <text evidence="3">Component of the cytochrome c oxidase, the last enzyme in the mitochondrial electron transport chain which drives oxidative phosphorylation. The respiratory chain contains 3 multisubunit complexes succinate dehydrogenase (complex II, CII), ubiquinol-cytochrome c oxidoreductase (cytochrome b-c1 complex, complex III, CIII) and cytochrome c oxidase (complex IV, CIV), that cooperate to transfer electrons derived from NADH and succinate to molecular oxygen, creating an electrochemical gradient over the inner membrane that drives transmembrane transport and the ATP synthase. Cytochrome c oxidase is the component of the respiratory chain that catalyzes the reduction of oxygen to water. Electrons originating from reduced cytochrome c in the intermembrane space (IMS) are transferred via the dinuclear copper A center (CU(A)) of subunit 2 and heme A of subunit 1 to the active site in subunit 1, a binuclear center (BNC) formed by heme A3 and copper B (CU(B)). The BNC reduces molecular oxygen to 2 water molecules using 4 electrons from cytochrome c in the IMS and 4 protons from the mitochondrial matrix.</text>
</comment>
<comment type="catalytic activity">
    <reaction evidence="3">
        <text>4 Fe(II)-[cytochrome c] + O2 + 8 H(+)(in) = 4 Fe(III)-[cytochrome c] + 2 H2O + 4 H(+)(out)</text>
        <dbReference type="Rhea" id="RHEA:11436"/>
        <dbReference type="Rhea" id="RHEA-COMP:10350"/>
        <dbReference type="Rhea" id="RHEA-COMP:14399"/>
        <dbReference type="ChEBI" id="CHEBI:15377"/>
        <dbReference type="ChEBI" id="CHEBI:15378"/>
        <dbReference type="ChEBI" id="CHEBI:15379"/>
        <dbReference type="ChEBI" id="CHEBI:29033"/>
        <dbReference type="ChEBI" id="CHEBI:29034"/>
        <dbReference type="EC" id="7.1.1.9"/>
    </reaction>
    <physiologicalReaction direction="left-to-right" evidence="3">
        <dbReference type="Rhea" id="RHEA:11437"/>
    </physiologicalReaction>
</comment>
<comment type="cofactor">
    <cofactor evidence="4">
        <name>Cu cation</name>
        <dbReference type="ChEBI" id="CHEBI:23378"/>
    </cofactor>
    <text evidence="4">Binds a dinuclear copper A center per subunit.</text>
</comment>
<comment type="subunit">
    <text evidence="1 4">Component of the cytochrome c oxidase (complex IV, CIV), a multisubunit enzyme composed of 14 subunits. The complex is composed of a catalytic core of 3 subunits MT-CO1, MT-CO2 and MT-CO3, encoded in the mitochondrial DNA, and 11 supernumerary subunits COX4I, COX5A, COX5B, COX6A, COX6B, COX6C, COX7A, COX7B, COX7C, COX8 and NDUFA4, which are encoded in the nuclear genome. The complex exists as a monomer or a dimer and forms supercomplexes (SCs) in the inner mitochondrial membrane with NADH-ubiquinone oxidoreductase (complex I, CI) and ubiquinol-cytochrome c oxidoreductase (cytochrome b-c1 complex, complex III, CIII), resulting in different assemblies (supercomplex SCI(1)III(2)IV(1) and megacomplex MCI(2)III(2)IV(2)) (By similarity). Found in a complex with TMEM177, COA6, COX18, COX20, SCO1 and SCO2. Interacts with TMEM177 in a COX20-dependent manner. Interacts with COX20. Interacts with COX16 (By similarity).</text>
</comment>
<comment type="subcellular location">
    <subcellularLocation>
        <location evidence="4">Mitochondrion inner membrane</location>
        <topology evidence="4">Multi-pass membrane protein</topology>
    </subcellularLocation>
</comment>
<comment type="similarity">
    <text evidence="5">Belongs to the cytochrome c oxidase subunit 2 family.</text>
</comment>
<dbReference type="EC" id="7.1.1.9"/>
<dbReference type="EMBL" id="AJ224821">
    <property type="protein sequence ID" value="CAA12141.1"/>
    <property type="molecule type" value="Genomic_DNA"/>
</dbReference>
<dbReference type="EMBL" id="DQ316069">
    <property type="protein sequence ID" value="ABC17907.1"/>
    <property type="molecule type" value="Genomic_DNA"/>
</dbReference>
<dbReference type="PIR" id="T45553">
    <property type="entry name" value="T45553"/>
</dbReference>
<dbReference type="RefSeq" id="NP_009282.1">
    <property type="nucleotide sequence ID" value="NC_000934.1"/>
</dbReference>
<dbReference type="SMR" id="Q9TA26"/>
<dbReference type="FunCoup" id="Q9TA26">
    <property type="interactions" value="36"/>
</dbReference>
<dbReference type="STRING" id="9785.ENSLAFP00000029494"/>
<dbReference type="Ensembl" id="ENSLAFT00000038053.1">
    <property type="protein sequence ID" value="ENSLAFP00000029494.1"/>
    <property type="gene ID" value="ENSLAFG00000033287.1"/>
</dbReference>
<dbReference type="GeneID" id="808790"/>
<dbReference type="KEGG" id="lav:808790"/>
<dbReference type="CTD" id="4513"/>
<dbReference type="eggNOG" id="KOG4767">
    <property type="taxonomic scope" value="Eukaryota"/>
</dbReference>
<dbReference type="GeneTree" id="ENSGT00390000017410"/>
<dbReference type="HOGENOM" id="CLU_036876_2_3_1"/>
<dbReference type="InParanoid" id="Q9TA26"/>
<dbReference type="OMA" id="WSYEYTD"/>
<dbReference type="OrthoDB" id="539285at2759"/>
<dbReference type="TreeFam" id="TF344269"/>
<dbReference type="Proteomes" id="UP000007646">
    <property type="component" value="Unassembled WGS sequence"/>
</dbReference>
<dbReference type="GO" id="GO:0005743">
    <property type="term" value="C:mitochondrial inner membrane"/>
    <property type="evidence" value="ECO:0007669"/>
    <property type="project" value="UniProtKB-SubCell"/>
</dbReference>
<dbReference type="GO" id="GO:0045277">
    <property type="term" value="C:respiratory chain complex IV"/>
    <property type="evidence" value="ECO:0000250"/>
    <property type="project" value="UniProtKB"/>
</dbReference>
<dbReference type="GO" id="GO:0005507">
    <property type="term" value="F:copper ion binding"/>
    <property type="evidence" value="ECO:0007669"/>
    <property type="project" value="InterPro"/>
</dbReference>
<dbReference type="GO" id="GO:0004129">
    <property type="term" value="F:cytochrome-c oxidase activity"/>
    <property type="evidence" value="ECO:0007669"/>
    <property type="project" value="UniProtKB-EC"/>
</dbReference>
<dbReference type="GO" id="GO:0042773">
    <property type="term" value="P:ATP synthesis coupled electron transport"/>
    <property type="evidence" value="ECO:0007669"/>
    <property type="project" value="TreeGrafter"/>
</dbReference>
<dbReference type="CDD" id="cd13912">
    <property type="entry name" value="CcO_II_C"/>
    <property type="match status" value="1"/>
</dbReference>
<dbReference type="FunFam" id="1.10.287.90:FF:000001">
    <property type="entry name" value="Cytochrome c oxidase subunit 2"/>
    <property type="match status" value="1"/>
</dbReference>
<dbReference type="FunFam" id="2.60.40.420:FF:000001">
    <property type="entry name" value="Cytochrome c oxidase subunit 2"/>
    <property type="match status" value="1"/>
</dbReference>
<dbReference type="Gene3D" id="1.10.287.90">
    <property type="match status" value="1"/>
</dbReference>
<dbReference type="Gene3D" id="2.60.40.420">
    <property type="entry name" value="Cupredoxins - blue copper proteins"/>
    <property type="match status" value="1"/>
</dbReference>
<dbReference type="InterPro" id="IPR045187">
    <property type="entry name" value="CcO_II"/>
</dbReference>
<dbReference type="InterPro" id="IPR002429">
    <property type="entry name" value="CcO_II-like_C"/>
</dbReference>
<dbReference type="InterPro" id="IPR034210">
    <property type="entry name" value="CcO_II_C"/>
</dbReference>
<dbReference type="InterPro" id="IPR001505">
    <property type="entry name" value="Copper_CuA"/>
</dbReference>
<dbReference type="InterPro" id="IPR008972">
    <property type="entry name" value="Cupredoxin"/>
</dbReference>
<dbReference type="InterPro" id="IPR014222">
    <property type="entry name" value="Cyt_c_oxidase_su2"/>
</dbReference>
<dbReference type="InterPro" id="IPR011759">
    <property type="entry name" value="Cyt_c_oxidase_su2_TM_dom"/>
</dbReference>
<dbReference type="InterPro" id="IPR036257">
    <property type="entry name" value="Cyt_c_oxidase_su2_TM_sf"/>
</dbReference>
<dbReference type="NCBIfam" id="TIGR02866">
    <property type="entry name" value="CoxB"/>
    <property type="match status" value="1"/>
</dbReference>
<dbReference type="PANTHER" id="PTHR22888:SF9">
    <property type="entry name" value="CYTOCHROME C OXIDASE SUBUNIT 2"/>
    <property type="match status" value="1"/>
</dbReference>
<dbReference type="PANTHER" id="PTHR22888">
    <property type="entry name" value="CYTOCHROME C OXIDASE, SUBUNIT II"/>
    <property type="match status" value="1"/>
</dbReference>
<dbReference type="Pfam" id="PF00116">
    <property type="entry name" value="COX2"/>
    <property type="match status" value="1"/>
</dbReference>
<dbReference type="Pfam" id="PF02790">
    <property type="entry name" value="COX2_TM"/>
    <property type="match status" value="1"/>
</dbReference>
<dbReference type="PRINTS" id="PR01166">
    <property type="entry name" value="CYCOXIDASEII"/>
</dbReference>
<dbReference type="SUPFAM" id="SSF49503">
    <property type="entry name" value="Cupredoxins"/>
    <property type="match status" value="1"/>
</dbReference>
<dbReference type="SUPFAM" id="SSF81464">
    <property type="entry name" value="Cytochrome c oxidase subunit II-like, transmembrane region"/>
    <property type="match status" value="1"/>
</dbReference>
<dbReference type="PROSITE" id="PS00078">
    <property type="entry name" value="COX2"/>
    <property type="match status" value="1"/>
</dbReference>
<dbReference type="PROSITE" id="PS50857">
    <property type="entry name" value="COX2_CUA"/>
    <property type="match status" value="1"/>
</dbReference>
<dbReference type="PROSITE" id="PS50999">
    <property type="entry name" value="COX2_TM"/>
    <property type="match status" value="1"/>
</dbReference>
<keyword id="KW-0186">Copper</keyword>
<keyword id="KW-0249">Electron transport</keyword>
<keyword id="KW-0460">Magnesium</keyword>
<keyword id="KW-0472">Membrane</keyword>
<keyword id="KW-0479">Metal-binding</keyword>
<keyword id="KW-0496">Mitochondrion</keyword>
<keyword id="KW-0999">Mitochondrion inner membrane</keyword>
<keyword id="KW-0597">Phosphoprotein</keyword>
<keyword id="KW-1185">Reference proteome</keyword>
<keyword id="KW-0679">Respiratory chain</keyword>
<keyword id="KW-1278">Translocase</keyword>
<keyword id="KW-0812">Transmembrane</keyword>
<keyword id="KW-1133">Transmembrane helix</keyword>
<keyword id="KW-0813">Transport</keyword>
<gene>
    <name type="primary">MT-CO2</name>
    <name type="synonym">COII</name>
    <name type="synonym">COX2</name>
    <name type="synonym">COXII</name>
    <name type="synonym">MTCO2</name>
</gene>
<protein>
    <recommendedName>
        <fullName>Cytochrome c oxidase subunit 2</fullName>
        <ecNumber>7.1.1.9</ecNumber>
    </recommendedName>
    <alternativeName>
        <fullName>Cytochrome c oxidase polypeptide II</fullName>
    </alternativeName>
</protein>